<sequence>MAKAKFERSKPHVNIGTIGHVDHGKTTLTAAITTVLAKAGGAEARGYDQIDAAPEERERGITISTAHVEYETETRHYAHVDCPGHADYVKNMITGAAQMDGGILVVSAADGPMPQTREHILLSRQVGVPYIVVFLNKCDMVDDEELLELVEMEVRDLLSEYGFPGDDIPVIKGSALKALQGEADWEAKIIELMAEVDAYIPTPERETDKPFLMPVEDVFSITGRGTVATGRVERGIVKVGDVVEIIGLAEENASTTVTGVEMFRKLLDQAQAGDNIGALLRGVAREDIQRGQVLAKSGSVKAHAKFKAEVFVLSKEEGGRHTPFFANYRPQFYFRTTDVTGIIQLPEGTEMVMPGDNIEMTIELIAPIAIEEGTKFSIREGGRTVGYGVVATIVE</sequence>
<gene>
    <name evidence="2" type="primary">tuf</name>
    <name type="ordered locus">BC_0129</name>
</gene>
<proteinExistence type="inferred from homology"/>
<dbReference type="EC" id="3.6.5.3" evidence="2"/>
<dbReference type="EMBL" id="AE016877">
    <property type="protein sequence ID" value="AAP07210.1"/>
    <property type="molecule type" value="Genomic_DNA"/>
</dbReference>
<dbReference type="RefSeq" id="NP_830009.1">
    <property type="nucleotide sequence ID" value="NC_004722.1"/>
</dbReference>
<dbReference type="RefSeq" id="WP_001029614.1">
    <property type="nucleotide sequence ID" value="NZ_CP138336.1"/>
</dbReference>
<dbReference type="SMR" id="Q814C4"/>
<dbReference type="STRING" id="226900.BC_0129"/>
<dbReference type="MetOSite" id="Q814C4"/>
<dbReference type="GeneID" id="93010945"/>
<dbReference type="KEGG" id="bce:BC0129"/>
<dbReference type="PATRIC" id="fig|226900.8.peg.130"/>
<dbReference type="HOGENOM" id="CLU_007265_0_1_9"/>
<dbReference type="OrthoDB" id="9804504at2"/>
<dbReference type="Proteomes" id="UP000001417">
    <property type="component" value="Chromosome"/>
</dbReference>
<dbReference type="GO" id="GO:0005737">
    <property type="term" value="C:cytoplasm"/>
    <property type="evidence" value="ECO:0007669"/>
    <property type="project" value="UniProtKB-SubCell"/>
</dbReference>
<dbReference type="GO" id="GO:0005525">
    <property type="term" value="F:GTP binding"/>
    <property type="evidence" value="ECO:0007669"/>
    <property type="project" value="UniProtKB-UniRule"/>
</dbReference>
<dbReference type="GO" id="GO:0003924">
    <property type="term" value="F:GTPase activity"/>
    <property type="evidence" value="ECO:0007669"/>
    <property type="project" value="InterPro"/>
</dbReference>
<dbReference type="GO" id="GO:0003746">
    <property type="term" value="F:translation elongation factor activity"/>
    <property type="evidence" value="ECO:0000318"/>
    <property type="project" value="GO_Central"/>
</dbReference>
<dbReference type="GO" id="GO:0006414">
    <property type="term" value="P:translational elongation"/>
    <property type="evidence" value="ECO:0000318"/>
    <property type="project" value="GO_Central"/>
</dbReference>
<dbReference type="CDD" id="cd01884">
    <property type="entry name" value="EF_Tu"/>
    <property type="match status" value="1"/>
</dbReference>
<dbReference type="CDD" id="cd03697">
    <property type="entry name" value="EFTU_II"/>
    <property type="match status" value="1"/>
</dbReference>
<dbReference type="CDD" id="cd03707">
    <property type="entry name" value="EFTU_III"/>
    <property type="match status" value="1"/>
</dbReference>
<dbReference type="FunFam" id="2.40.30.10:FF:000001">
    <property type="entry name" value="Elongation factor Tu"/>
    <property type="match status" value="1"/>
</dbReference>
<dbReference type="FunFam" id="3.40.50.300:FF:000003">
    <property type="entry name" value="Elongation factor Tu"/>
    <property type="match status" value="1"/>
</dbReference>
<dbReference type="Gene3D" id="3.40.50.300">
    <property type="entry name" value="P-loop containing nucleotide triphosphate hydrolases"/>
    <property type="match status" value="1"/>
</dbReference>
<dbReference type="Gene3D" id="2.40.30.10">
    <property type="entry name" value="Translation factors"/>
    <property type="match status" value="2"/>
</dbReference>
<dbReference type="HAMAP" id="MF_00118_B">
    <property type="entry name" value="EF_Tu_B"/>
    <property type="match status" value="1"/>
</dbReference>
<dbReference type="InterPro" id="IPR041709">
    <property type="entry name" value="EF-Tu_GTP-bd"/>
</dbReference>
<dbReference type="InterPro" id="IPR050055">
    <property type="entry name" value="EF-Tu_GTPase"/>
</dbReference>
<dbReference type="InterPro" id="IPR004161">
    <property type="entry name" value="EFTu-like_2"/>
</dbReference>
<dbReference type="InterPro" id="IPR033720">
    <property type="entry name" value="EFTU_2"/>
</dbReference>
<dbReference type="InterPro" id="IPR031157">
    <property type="entry name" value="G_TR_CS"/>
</dbReference>
<dbReference type="InterPro" id="IPR027417">
    <property type="entry name" value="P-loop_NTPase"/>
</dbReference>
<dbReference type="InterPro" id="IPR005225">
    <property type="entry name" value="Small_GTP-bd"/>
</dbReference>
<dbReference type="InterPro" id="IPR000795">
    <property type="entry name" value="T_Tr_GTP-bd_dom"/>
</dbReference>
<dbReference type="InterPro" id="IPR009000">
    <property type="entry name" value="Transl_B-barrel_sf"/>
</dbReference>
<dbReference type="InterPro" id="IPR009001">
    <property type="entry name" value="Transl_elong_EF1A/Init_IF2_C"/>
</dbReference>
<dbReference type="InterPro" id="IPR004541">
    <property type="entry name" value="Transl_elong_EFTu/EF1A_bac/org"/>
</dbReference>
<dbReference type="InterPro" id="IPR004160">
    <property type="entry name" value="Transl_elong_EFTu/EF1A_C"/>
</dbReference>
<dbReference type="NCBIfam" id="TIGR00485">
    <property type="entry name" value="EF-Tu"/>
    <property type="match status" value="1"/>
</dbReference>
<dbReference type="NCBIfam" id="NF000766">
    <property type="entry name" value="PRK00049.1"/>
    <property type="match status" value="1"/>
</dbReference>
<dbReference type="NCBIfam" id="NF009372">
    <property type="entry name" value="PRK12735.1"/>
    <property type="match status" value="1"/>
</dbReference>
<dbReference type="NCBIfam" id="NF009373">
    <property type="entry name" value="PRK12736.1"/>
    <property type="match status" value="1"/>
</dbReference>
<dbReference type="NCBIfam" id="TIGR00231">
    <property type="entry name" value="small_GTP"/>
    <property type="match status" value="1"/>
</dbReference>
<dbReference type="PANTHER" id="PTHR43721:SF22">
    <property type="entry name" value="ELONGATION FACTOR TU, MITOCHONDRIAL"/>
    <property type="match status" value="1"/>
</dbReference>
<dbReference type="PANTHER" id="PTHR43721">
    <property type="entry name" value="ELONGATION FACTOR TU-RELATED"/>
    <property type="match status" value="1"/>
</dbReference>
<dbReference type="Pfam" id="PF00009">
    <property type="entry name" value="GTP_EFTU"/>
    <property type="match status" value="1"/>
</dbReference>
<dbReference type="Pfam" id="PF03144">
    <property type="entry name" value="GTP_EFTU_D2"/>
    <property type="match status" value="1"/>
</dbReference>
<dbReference type="Pfam" id="PF03143">
    <property type="entry name" value="GTP_EFTU_D3"/>
    <property type="match status" value="1"/>
</dbReference>
<dbReference type="PRINTS" id="PR00315">
    <property type="entry name" value="ELONGATNFCT"/>
</dbReference>
<dbReference type="SUPFAM" id="SSF50465">
    <property type="entry name" value="EF-Tu/eEF-1alpha/eIF2-gamma C-terminal domain"/>
    <property type="match status" value="1"/>
</dbReference>
<dbReference type="SUPFAM" id="SSF52540">
    <property type="entry name" value="P-loop containing nucleoside triphosphate hydrolases"/>
    <property type="match status" value="1"/>
</dbReference>
<dbReference type="SUPFAM" id="SSF50447">
    <property type="entry name" value="Translation proteins"/>
    <property type="match status" value="1"/>
</dbReference>
<dbReference type="PROSITE" id="PS00301">
    <property type="entry name" value="G_TR_1"/>
    <property type="match status" value="1"/>
</dbReference>
<dbReference type="PROSITE" id="PS51722">
    <property type="entry name" value="G_TR_2"/>
    <property type="match status" value="1"/>
</dbReference>
<reference key="1">
    <citation type="journal article" date="2003" name="Nature">
        <title>Genome sequence of Bacillus cereus and comparative analysis with Bacillus anthracis.</title>
        <authorList>
            <person name="Ivanova N."/>
            <person name="Sorokin A."/>
            <person name="Anderson I."/>
            <person name="Galleron N."/>
            <person name="Candelon B."/>
            <person name="Kapatral V."/>
            <person name="Bhattacharyya A."/>
            <person name="Reznik G."/>
            <person name="Mikhailova N."/>
            <person name="Lapidus A."/>
            <person name="Chu L."/>
            <person name="Mazur M."/>
            <person name="Goltsman E."/>
            <person name="Larsen N."/>
            <person name="D'Souza M."/>
            <person name="Walunas T."/>
            <person name="Grechkin Y."/>
            <person name="Pusch G."/>
            <person name="Haselkorn R."/>
            <person name="Fonstein M."/>
            <person name="Ehrlich S.D."/>
            <person name="Overbeek R."/>
            <person name="Kyrpides N.C."/>
        </authorList>
    </citation>
    <scope>NUCLEOTIDE SEQUENCE [LARGE SCALE GENOMIC DNA]</scope>
    <source>
        <strain>ATCC 14579 / DSM 31 / CCUG 7414 / JCM 2152 / NBRC 15305 / NCIMB 9373 / NCTC 2599 / NRRL B-3711</strain>
    </source>
</reference>
<comment type="function">
    <text evidence="2">GTP hydrolase that promotes the GTP-dependent binding of aminoacyl-tRNA to the A-site of ribosomes during protein biosynthesis.</text>
</comment>
<comment type="catalytic activity">
    <reaction evidence="2">
        <text>GTP + H2O = GDP + phosphate + H(+)</text>
        <dbReference type="Rhea" id="RHEA:19669"/>
        <dbReference type="ChEBI" id="CHEBI:15377"/>
        <dbReference type="ChEBI" id="CHEBI:15378"/>
        <dbReference type="ChEBI" id="CHEBI:37565"/>
        <dbReference type="ChEBI" id="CHEBI:43474"/>
        <dbReference type="ChEBI" id="CHEBI:58189"/>
        <dbReference type="EC" id="3.6.5.3"/>
    </reaction>
    <physiologicalReaction direction="left-to-right" evidence="2">
        <dbReference type="Rhea" id="RHEA:19670"/>
    </physiologicalReaction>
</comment>
<comment type="subunit">
    <text evidence="2">Monomer.</text>
</comment>
<comment type="subcellular location">
    <subcellularLocation>
        <location evidence="2">Cytoplasm</location>
    </subcellularLocation>
</comment>
<comment type="similarity">
    <text evidence="2">Belongs to the TRAFAC class translation factor GTPase superfamily. Classic translation factor GTPase family. EF-Tu/EF-1A subfamily.</text>
</comment>
<name>EFTU_BACCR</name>
<keyword id="KW-0963">Cytoplasm</keyword>
<keyword id="KW-0251">Elongation factor</keyword>
<keyword id="KW-0342">GTP-binding</keyword>
<keyword id="KW-0378">Hydrolase</keyword>
<keyword id="KW-0460">Magnesium</keyword>
<keyword id="KW-0479">Metal-binding</keyword>
<keyword id="KW-0547">Nucleotide-binding</keyword>
<keyword id="KW-0648">Protein biosynthesis</keyword>
<keyword id="KW-1185">Reference proteome</keyword>
<protein>
    <recommendedName>
        <fullName evidence="2">Elongation factor Tu</fullName>
        <shortName evidence="2">EF-Tu</shortName>
        <ecNumber evidence="2">3.6.5.3</ecNumber>
    </recommendedName>
</protein>
<accession>Q814C4</accession>
<evidence type="ECO:0000250" key="1"/>
<evidence type="ECO:0000255" key="2">
    <source>
        <dbReference type="HAMAP-Rule" id="MF_00118"/>
    </source>
</evidence>
<organism>
    <name type="scientific">Bacillus cereus (strain ATCC 14579 / DSM 31 / CCUG 7414 / JCM 2152 / NBRC 15305 / NCIMB 9373 / NCTC 2599 / NRRL B-3711)</name>
    <dbReference type="NCBI Taxonomy" id="226900"/>
    <lineage>
        <taxon>Bacteria</taxon>
        <taxon>Bacillati</taxon>
        <taxon>Bacillota</taxon>
        <taxon>Bacilli</taxon>
        <taxon>Bacillales</taxon>
        <taxon>Bacillaceae</taxon>
        <taxon>Bacillus</taxon>
        <taxon>Bacillus cereus group</taxon>
    </lineage>
</organism>
<feature type="chain" id="PRO_0000091287" description="Elongation factor Tu">
    <location>
        <begin position="1"/>
        <end position="395"/>
    </location>
</feature>
<feature type="domain" description="tr-type G">
    <location>
        <begin position="10"/>
        <end position="204"/>
    </location>
</feature>
<feature type="region of interest" description="G1" evidence="1">
    <location>
        <begin position="19"/>
        <end position="26"/>
    </location>
</feature>
<feature type="region of interest" description="G2" evidence="1">
    <location>
        <begin position="60"/>
        <end position="64"/>
    </location>
</feature>
<feature type="region of interest" description="G3" evidence="1">
    <location>
        <begin position="81"/>
        <end position="84"/>
    </location>
</feature>
<feature type="region of interest" description="G4" evidence="1">
    <location>
        <begin position="136"/>
        <end position="139"/>
    </location>
</feature>
<feature type="region of interest" description="G5" evidence="1">
    <location>
        <begin position="174"/>
        <end position="176"/>
    </location>
</feature>
<feature type="binding site" evidence="2">
    <location>
        <begin position="19"/>
        <end position="26"/>
    </location>
    <ligand>
        <name>GTP</name>
        <dbReference type="ChEBI" id="CHEBI:37565"/>
    </ligand>
</feature>
<feature type="binding site" evidence="2">
    <location>
        <position position="26"/>
    </location>
    <ligand>
        <name>Mg(2+)</name>
        <dbReference type="ChEBI" id="CHEBI:18420"/>
    </ligand>
</feature>
<feature type="binding site" evidence="2">
    <location>
        <begin position="81"/>
        <end position="85"/>
    </location>
    <ligand>
        <name>GTP</name>
        <dbReference type="ChEBI" id="CHEBI:37565"/>
    </ligand>
</feature>
<feature type="binding site" evidence="2">
    <location>
        <begin position="136"/>
        <end position="139"/>
    </location>
    <ligand>
        <name>GTP</name>
        <dbReference type="ChEBI" id="CHEBI:37565"/>
    </ligand>
</feature>